<organism>
    <name type="scientific">Chaetomium globosum (strain ATCC 6205 / CBS 148.51 / DSM 1962 / NBRC 6347 / NRRL 1970)</name>
    <name type="common">Soil fungus</name>
    <dbReference type="NCBI Taxonomy" id="306901"/>
    <lineage>
        <taxon>Eukaryota</taxon>
        <taxon>Fungi</taxon>
        <taxon>Dikarya</taxon>
        <taxon>Ascomycota</taxon>
        <taxon>Pezizomycotina</taxon>
        <taxon>Sordariomycetes</taxon>
        <taxon>Sordariomycetidae</taxon>
        <taxon>Sordariales</taxon>
        <taxon>Chaetomiaceae</taxon>
        <taxon>Chaetomium</taxon>
    </lineage>
</organism>
<reference key="1">
    <citation type="journal article" date="2015" name="Genome Announc.">
        <title>Draft genome sequence of the cellulolytic fungus Chaetomium globosum.</title>
        <authorList>
            <person name="Cuomo C.A."/>
            <person name="Untereiner W.A."/>
            <person name="Ma L.-J."/>
            <person name="Grabherr M."/>
            <person name="Birren B.W."/>
        </authorList>
    </citation>
    <scope>NUCLEOTIDE SEQUENCE [LARGE SCALE GENOMIC DNA]</scope>
    <source>
        <strain>ATCC 6205 / CBS 148.51 / DSM 1962 / NBRC 6347 / NRRL 1970</strain>
    </source>
</reference>
<feature type="chain" id="PRO_0000365984" description="Eukaryotic translation initiation factor 3 subunit E">
    <location>
        <begin position="1"/>
        <end position="447"/>
    </location>
</feature>
<feature type="domain" description="PCI" evidence="2">
    <location>
        <begin position="253"/>
        <end position="421"/>
    </location>
</feature>
<protein>
    <recommendedName>
        <fullName evidence="1">Eukaryotic translation initiation factor 3 subunit E</fullName>
        <shortName evidence="1">eIF3e</shortName>
    </recommendedName>
</protein>
<evidence type="ECO:0000255" key="1">
    <source>
        <dbReference type="HAMAP-Rule" id="MF_03004"/>
    </source>
</evidence>
<evidence type="ECO:0000255" key="2">
    <source>
        <dbReference type="PROSITE-ProRule" id="PRU01185"/>
    </source>
</evidence>
<keyword id="KW-0963">Cytoplasm</keyword>
<keyword id="KW-0396">Initiation factor</keyword>
<keyword id="KW-0648">Protein biosynthesis</keyword>
<keyword id="KW-1185">Reference proteome</keyword>
<name>EIF3E_CHAGB</name>
<gene>
    <name evidence="1" type="primary">INT6</name>
    <name type="ORF">CHGG_02352</name>
</gene>
<sequence length="447" mass="51011">MASAPNANGDAAVSDYDLMLKLAQNLDRHMIFPLLEFSAGQLVDEESGVVRDEAKAREITQAKYSLLKNSNMTDYVANLYCELAGVEEPPAEFADKKQKVFSQLQNLEQQTSKIIELLEREDVVNNLRSDKVANLEFLKREHQVTMDMVNALFDLGNLQYSCGNYGDASEMLYRFRVLSTDNDKVAFATWGRLACEILTMNWESAMEELVKVRETIDTKLSQNPLAQLQHRTALTHWALFPLFNFEKAREPILELFFNAGYINTIQANCPWILRYLAVAVITNRGRAKNPGIHQKQMKDVVRIVKQEAYEYQDPITRFVHALAIDFDFEEAQRQLVLAEEVLRSDFFLLAHADDFVDSARHLIFESYCKIHARISLKDLSARLGLNADAAEKWIVNLIRDTRLDAKIDYKEGTVVMNHPPSSVYQQVIEKTKGGFFRTQVLTAAIAK</sequence>
<dbReference type="EMBL" id="CH408030">
    <property type="protein sequence ID" value="EAQ90417.1"/>
    <property type="molecule type" value="Genomic_DNA"/>
</dbReference>
<dbReference type="RefSeq" id="XP_001228868.1">
    <property type="nucleotide sequence ID" value="XM_001228867.1"/>
</dbReference>
<dbReference type="SMR" id="Q2HBQ2"/>
<dbReference type="STRING" id="306901.Q2HBQ2"/>
<dbReference type="GeneID" id="4389053"/>
<dbReference type="VEuPathDB" id="FungiDB:CHGG_02352"/>
<dbReference type="eggNOG" id="KOG2758">
    <property type="taxonomic scope" value="Eukaryota"/>
</dbReference>
<dbReference type="HOGENOM" id="CLU_031132_0_0_1"/>
<dbReference type="InParanoid" id="Q2HBQ2"/>
<dbReference type="OMA" id="NCPWILR"/>
<dbReference type="OrthoDB" id="417252at2759"/>
<dbReference type="Proteomes" id="UP000001056">
    <property type="component" value="Unassembled WGS sequence"/>
</dbReference>
<dbReference type="GO" id="GO:0016282">
    <property type="term" value="C:eukaryotic 43S preinitiation complex"/>
    <property type="evidence" value="ECO:0007669"/>
    <property type="project" value="UniProtKB-UniRule"/>
</dbReference>
<dbReference type="GO" id="GO:0033290">
    <property type="term" value="C:eukaryotic 48S preinitiation complex"/>
    <property type="evidence" value="ECO:0007669"/>
    <property type="project" value="UniProtKB-UniRule"/>
</dbReference>
<dbReference type="GO" id="GO:0071540">
    <property type="term" value="C:eukaryotic translation initiation factor 3 complex, eIF3e"/>
    <property type="evidence" value="ECO:0007669"/>
    <property type="project" value="UniProtKB-UniRule"/>
</dbReference>
<dbReference type="GO" id="GO:0003743">
    <property type="term" value="F:translation initiation factor activity"/>
    <property type="evidence" value="ECO:0007669"/>
    <property type="project" value="UniProtKB-UniRule"/>
</dbReference>
<dbReference type="GO" id="GO:0001732">
    <property type="term" value="P:formation of cytoplasmic translation initiation complex"/>
    <property type="evidence" value="ECO:0007669"/>
    <property type="project" value="UniProtKB-UniRule"/>
</dbReference>
<dbReference type="CDD" id="cd21378">
    <property type="entry name" value="eIF3E"/>
    <property type="match status" value="1"/>
</dbReference>
<dbReference type="Gene3D" id="1.25.40.570">
    <property type="match status" value="1"/>
</dbReference>
<dbReference type="HAMAP" id="MF_03004">
    <property type="entry name" value="eIF3e"/>
    <property type="match status" value="1"/>
</dbReference>
<dbReference type="InterPro" id="IPR016650">
    <property type="entry name" value="eIF3e"/>
</dbReference>
<dbReference type="InterPro" id="IPR019010">
    <property type="entry name" value="eIF3e_N"/>
</dbReference>
<dbReference type="InterPro" id="IPR000717">
    <property type="entry name" value="PCI_dom"/>
</dbReference>
<dbReference type="InterPro" id="IPR036390">
    <property type="entry name" value="WH_DNA-bd_sf"/>
</dbReference>
<dbReference type="PANTHER" id="PTHR10317">
    <property type="entry name" value="EUKARYOTIC TRANSLATION INITIATION FACTOR 3 SUBUNIT E"/>
    <property type="match status" value="1"/>
</dbReference>
<dbReference type="Pfam" id="PF09440">
    <property type="entry name" value="eIF3_N"/>
    <property type="match status" value="1"/>
</dbReference>
<dbReference type="Pfam" id="PF21357">
    <property type="entry name" value="EIF3E_C"/>
    <property type="match status" value="1"/>
</dbReference>
<dbReference type="Pfam" id="PF01399">
    <property type="entry name" value="PCI"/>
    <property type="match status" value="1"/>
</dbReference>
<dbReference type="PIRSF" id="PIRSF016255">
    <property type="entry name" value="eIF3e_su6"/>
    <property type="match status" value="1"/>
</dbReference>
<dbReference type="SMART" id="SM01186">
    <property type="entry name" value="eIF3_N"/>
    <property type="match status" value="1"/>
</dbReference>
<dbReference type="SMART" id="SM00088">
    <property type="entry name" value="PINT"/>
    <property type="match status" value="1"/>
</dbReference>
<dbReference type="SUPFAM" id="SSF46785">
    <property type="entry name" value="Winged helix' DNA-binding domain"/>
    <property type="match status" value="1"/>
</dbReference>
<dbReference type="PROSITE" id="PS50250">
    <property type="entry name" value="PCI"/>
    <property type="match status" value="1"/>
</dbReference>
<comment type="function">
    <text evidence="1">Component of the eukaryotic translation initiation factor 3 (eIF-3) complex, which is involved in protein synthesis of a specialized repertoire of mRNAs and, together with other initiation factors, stimulates binding of mRNA and methionyl-tRNAi to the 40S ribosome. The eIF-3 complex specifically targets and initiates translation of a subset of mRNAs involved in cell proliferation.</text>
</comment>
<comment type="subunit">
    <text evidence="1">Component of the eukaryotic translation initiation factor 3 (eIF-3) complex.</text>
</comment>
<comment type="subcellular location">
    <subcellularLocation>
        <location evidence="1">Cytoplasm</location>
    </subcellularLocation>
</comment>
<comment type="similarity">
    <text evidence="1">Belongs to the eIF-3 subunit E family.</text>
</comment>
<accession>Q2HBQ2</accession>
<proteinExistence type="inferred from homology"/>